<protein>
    <recommendedName>
        <fullName evidence="1">Large ribosomal subunit protein uL23</fullName>
    </recommendedName>
    <alternativeName>
        <fullName evidence="2">50S ribosomal protein L23</fullName>
    </alternativeName>
</protein>
<name>RL23_MYCUA</name>
<accession>A0PM65</accession>
<dbReference type="EMBL" id="CP000325">
    <property type="protein sequence ID" value="ABL03434.1"/>
    <property type="molecule type" value="Genomic_DNA"/>
</dbReference>
<dbReference type="RefSeq" id="WP_011739059.1">
    <property type="nucleotide sequence ID" value="NC_008611.1"/>
</dbReference>
<dbReference type="SMR" id="A0PM65"/>
<dbReference type="KEGG" id="mul:MUL_0792"/>
<dbReference type="eggNOG" id="COG0089">
    <property type="taxonomic scope" value="Bacteria"/>
</dbReference>
<dbReference type="HOGENOM" id="CLU_037562_3_2_11"/>
<dbReference type="Proteomes" id="UP000000765">
    <property type="component" value="Chromosome"/>
</dbReference>
<dbReference type="GO" id="GO:1990904">
    <property type="term" value="C:ribonucleoprotein complex"/>
    <property type="evidence" value="ECO:0007669"/>
    <property type="project" value="UniProtKB-KW"/>
</dbReference>
<dbReference type="GO" id="GO:0005840">
    <property type="term" value="C:ribosome"/>
    <property type="evidence" value="ECO:0007669"/>
    <property type="project" value="UniProtKB-KW"/>
</dbReference>
<dbReference type="GO" id="GO:0019843">
    <property type="term" value="F:rRNA binding"/>
    <property type="evidence" value="ECO:0007669"/>
    <property type="project" value="UniProtKB-UniRule"/>
</dbReference>
<dbReference type="GO" id="GO:0003735">
    <property type="term" value="F:structural constituent of ribosome"/>
    <property type="evidence" value="ECO:0007669"/>
    <property type="project" value="InterPro"/>
</dbReference>
<dbReference type="GO" id="GO:0006412">
    <property type="term" value="P:translation"/>
    <property type="evidence" value="ECO:0007669"/>
    <property type="project" value="UniProtKB-UniRule"/>
</dbReference>
<dbReference type="FunFam" id="3.30.70.330:FF:000001">
    <property type="entry name" value="50S ribosomal protein L23"/>
    <property type="match status" value="1"/>
</dbReference>
<dbReference type="Gene3D" id="3.30.70.330">
    <property type="match status" value="1"/>
</dbReference>
<dbReference type="HAMAP" id="MF_01369_B">
    <property type="entry name" value="Ribosomal_uL23_B"/>
    <property type="match status" value="1"/>
</dbReference>
<dbReference type="InterPro" id="IPR012677">
    <property type="entry name" value="Nucleotide-bd_a/b_plait_sf"/>
</dbReference>
<dbReference type="InterPro" id="IPR013025">
    <property type="entry name" value="Ribosomal_uL23-like"/>
</dbReference>
<dbReference type="InterPro" id="IPR012678">
    <property type="entry name" value="Ribosomal_uL23/eL15/eS24_sf"/>
</dbReference>
<dbReference type="InterPro" id="IPR001014">
    <property type="entry name" value="Ribosomal_uL23_CS"/>
</dbReference>
<dbReference type="NCBIfam" id="NF004363">
    <property type="entry name" value="PRK05738.2-4"/>
    <property type="match status" value="1"/>
</dbReference>
<dbReference type="NCBIfam" id="NF004364">
    <property type="entry name" value="PRK05738.2-5"/>
    <property type="match status" value="1"/>
</dbReference>
<dbReference type="PANTHER" id="PTHR11620">
    <property type="entry name" value="60S RIBOSOMAL PROTEIN L23A"/>
    <property type="match status" value="1"/>
</dbReference>
<dbReference type="Pfam" id="PF00276">
    <property type="entry name" value="Ribosomal_L23"/>
    <property type="match status" value="1"/>
</dbReference>
<dbReference type="SUPFAM" id="SSF54189">
    <property type="entry name" value="Ribosomal proteins S24e, L23 and L15e"/>
    <property type="match status" value="1"/>
</dbReference>
<dbReference type="PROSITE" id="PS00050">
    <property type="entry name" value="RIBOSOMAL_L23"/>
    <property type="match status" value="1"/>
</dbReference>
<feature type="chain" id="PRO_1000068118" description="Large ribosomal subunit protein uL23">
    <location>
        <begin position="1"/>
        <end position="100"/>
    </location>
</feature>
<keyword id="KW-0687">Ribonucleoprotein</keyword>
<keyword id="KW-0689">Ribosomal protein</keyword>
<keyword id="KW-0694">RNA-binding</keyword>
<keyword id="KW-0699">rRNA-binding</keyword>
<proteinExistence type="inferred from homology"/>
<gene>
    <name evidence="1" type="primary">rplW</name>
    <name type="ordered locus">MUL_0792</name>
</gene>
<evidence type="ECO:0000255" key="1">
    <source>
        <dbReference type="HAMAP-Rule" id="MF_01369"/>
    </source>
</evidence>
<evidence type="ECO:0000305" key="2"/>
<reference key="1">
    <citation type="journal article" date="2007" name="Genome Res.">
        <title>Reductive evolution and niche adaptation inferred from the genome of Mycobacterium ulcerans, the causative agent of Buruli ulcer.</title>
        <authorList>
            <person name="Stinear T.P."/>
            <person name="Seemann T."/>
            <person name="Pidot S."/>
            <person name="Frigui W."/>
            <person name="Reysset G."/>
            <person name="Garnier T."/>
            <person name="Meurice G."/>
            <person name="Simon D."/>
            <person name="Bouchier C."/>
            <person name="Ma L."/>
            <person name="Tichit M."/>
            <person name="Porter J.L."/>
            <person name="Ryan J."/>
            <person name="Johnson P.D.R."/>
            <person name="Davies J.K."/>
            <person name="Jenkin G.A."/>
            <person name="Small P.L.C."/>
            <person name="Jones L.M."/>
            <person name="Tekaia F."/>
            <person name="Laval F."/>
            <person name="Daffe M."/>
            <person name="Parkhill J."/>
            <person name="Cole S.T."/>
        </authorList>
    </citation>
    <scope>NUCLEOTIDE SEQUENCE [LARGE SCALE GENOMIC DNA]</scope>
    <source>
        <strain>Agy99</strain>
    </source>
</reference>
<sequence length="100" mass="10965">MATIVDPRDIILAPVISEKSYALLDDNVYIFVVHPDSNKTQIKIAIEKIFAVKVASVNTANRQGKRKRTRTGYGKRKSTKRAIVTLAPGSKPIDLFGAPA</sequence>
<comment type="function">
    <text evidence="1">One of the early assembly proteins it binds 23S rRNA. One of the proteins that surrounds the polypeptide exit tunnel on the outside of the ribosome. Forms the main docking site for trigger factor binding to the ribosome.</text>
</comment>
<comment type="subunit">
    <text evidence="1">Part of the 50S ribosomal subunit. Contacts protein L29, and trigger factor when it is bound to the ribosome.</text>
</comment>
<comment type="similarity">
    <text evidence="1">Belongs to the universal ribosomal protein uL23 family.</text>
</comment>
<organism>
    <name type="scientific">Mycobacterium ulcerans (strain Agy99)</name>
    <dbReference type="NCBI Taxonomy" id="362242"/>
    <lineage>
        <taxon>Bacteria</taxon>
        <taxon>Bacillati</taxon>
        <taxon>Actinomycetota</taxon>
        <taxon>Actinomycetes</taxon>
        <taxon>Mycobacteriales</taxon>
        <taxon>Mycobacteriaceae</taxon>
        <taxon>Mycobacterium</taxon>
        <taxon>Mycobacterium ulcerans group</taxon>
    </lineage>
</organism>